<comment type="function">
    <text evidence="2">Bifunctional enzyme involved in flavonoid metabolism.</text>
</comment>
<comment type="catalytic activity">
    <reaction evidence="2">
        <text>a (2R,3S,4S)-leucoanthocyanidin + NADP(+) = a (2R,3R)-dihydroflavonol + NADPH + H(+)</text>
        <dbReference type="Rhea" id="RHEA:54444"/>
        <dbReference type="ChEBI" id="CHEBI:15378"/>
        <dbReference type="ChEBI" id="CHEBI:57783"/>
        <dbReference type="ChEBI" id="CHEBI:58349"/>
        <dbReference type="ChEBI" id="CHEBI:138176"/>
        <dbReference type="ChEBI" id="CHEBI:138188"/>
        <dbReference type="EC" id="1.1.1.219"/>
    </reaction>
</comment>
<comment type="catalytic activity">
    <reaction evidence="2">
        <text>(2S)-flavan-4-ol + NADP(+) = (2S)-flavanone + NADPH + H(+)</text>
        <dbReference type="Rhea" id="RHEA:11228"/>
        <dbReference type="ChEBI" id="CHEBI:15378"/>
        <dbReference type="ChEBI" id="CHEBI:15605"/>
        <dbReference type="ChEBI" id="CHEBI:15606"/>
        <dbReference type="ChEBI" id="CHEBI:57783"/>
        <dbReference type="ChEBI" id="CHEBI:58349"/>
        <dbReference type="EC" id="1.1.1.234"/>
    </reaction>
</comment>
<comment type="pathway">
    <text>Pigment biosynthesis; anthocyanin biosynthesis.</text>
</comment>
<comment type="similarity">
    <text evidence="3">Belongs to the NAD(P)-dependent epimerase/dehydratase family. Dihydroflavonol-4-reductase subfamily.</text>
</comment>
<reference key="1">
    <citation type="journal article" date="1987" name="EMBO J.">
        <title>Influence of transposable elements on the structure and function of the A1 gene of Zea mays.</title>
        <authorList>
            <person name="Schwarz-Sommer Z."/>
            <person name="Shepherd N."/>
            <person name="Tacke E."/>
            <person name="Gierl A."/>
            <person name="Rohde W."/>
            <person name="Leclercq L."/>
            <person name="Mattes M."/>
            <person name="Berndtgen R."/>
            <person name="Peterson P.A."/>
            <person name="Saedler H."/>
        </authorList>
    </citation>
    <scope>NUCLEOTIDE SEQUENCE [GENOMIC DNA]</scope>
    <source>
        <strain>cv. Wisconsin 22</strain>
    </source>
</reference>
<reference key="2">
    <citation type="journal article" date="1992" name="Mol. Gen. Genet.">
        <title>Endogenous and environmental factors influence 35S promoter methylation of a maize A1 gene construct in transgenic petunia and its colour phenotype.</title>
        <authorList>
            <person name="Meyer P."/>
            <person name="Linn F."/>
            <person name="Heidmann I."/>
            <person name="Heiner Meyer Z.A."/>
            <person name="Niedenhof I."/>
            <person name="Saedler H."/>
        </authorList>
    </citation>
    <scope>NUCLEOTIDE SEQUENCE [GENOMIC DNA]</scope>
    <source>
        <strain>cv. Wisconsin 22</strain>
    </source>
</reference>
<evidence type="ECO:0000250" key="1">
    <source>
        <dbReference type="UniProtKB" id="A0A059TC02"/>
    </source>
</evidence>
<evidence type="ECO:0000250" key="2">
    <source>
        <dbReference type="UniProtKB" id="Q9XES5"/>
    </source>
</evidence>
<evidence type="ECO:0000305" key="3"/>
<accession>P51108</accession>
<protein>
    <recommendedName>
        <fullName>Dihydroflavonol 4-reductase</fullName>
        <shortName>DFR</shortName>
        <ecNumber evidence="2">1.1.1.219</ecNumber>
    </recommendedName>
    <alternativeName>
        <fullName>Dihydrokaempferol 4-reductase</fullName>
    </alternativeName>
    <alternativeName>
        <fullName>Flavanone 4-reductase</fullName>
        <shortName>FNR</shortName>
        <ecNumber evidence="2">1.1.1.234</ecNumber>
    </alternativeName>
</protein>
<name>DFRA_MAIZE</name>
<sequence length="357" mass="38856">MERGAGASEKGTVLVTGASGFVGSWLVMKLLQAGYTVRATVRDPANVGKTKPLMDLPGATERLSIWKADLAEEGSFHDAIRGCTGVFHVATPMDFLSKDPENEVIKPTVEGMISIMRACKEAGTVRRIVFTSSAGTVNLEERQRPVYDEESWTDVDFCRRVKMTGWMYFVSKTLAEKAALAYAAEHGLDLVTIIPTLVVGPFISASMPPSLITALALITGNAPHYSILKQVQLIHLDDLCDAEIFLFENPAAAGRYVCSSHDVTIHGLAAMLRDRYPEYDVPQRFPGIQDDLQPVRFSSKKLQDLGFTFRYKTLEDMFDAAIRTCQEKGLIPLATAAGGDGFASVRAPGETEATIGA</sequence>
<proteinExistence type="inferred from homology"/>
<dbReference type="EC" id="1.1.1.219" evidence="2"/>
<dbReference type="EC" id="1.1.1.234" evidence="2"/>
<dbReference type="EMBL" id="X05068">
    <property type="protein sequence ID" value="CAA28734.1"/>
    <property type="molecule type" value="Genomic_DNA"/>
</dbReference>
<dbReference type="SMR" id="P51108"/>
<dbReference type="FunCoup" id="P51108">
    <property type="interactions" value="115"/>
</dbReference>
<dbReference type="STRING" id="4577.P51108"/>
<dbReference type="PaxDb" id="4577-GRMZM2G026930_P01"/>
<dbReference type="MaizeGDB" id="13795"/>
<dbReference type="eggNOG" id="KOG1502">
    <property type="taxonomic scope" value="Eukaryota"/>
</dbReference>
<dbReference type="InParanoid" id="P51108"/>
<dbReference type="BioCyc" id="MetaCyc:MONOMER-18488"/>
<dbReference type="UniPathway" id="UPA00009"/>
<dbReference type="Proteomes" id="UP000007305">
    <property type="component" value="Unplaced"/>
</dbReference>
<dbReference type="ExpressionAtlas" id="P51108">
    <property type="expression patterns" value="baseline and differential"/>
</dbReference>
<dbReference type="GO" id="GO:0045552">
    <property type="term" value="F:dihydrokaempferol 4-reductase activity"/>
    <property type="evidence" value="ECO:0007669"/>
    <property type="project" value="UniProtKB-EC"/>
</dbReference>
<dbReference type="GO" id="GO:0047890">
    <property type="term" value="F:flavanone 4-reductase activity"/>
    <property type="evidence" value="ECO:0007669"/>
    <property type="project" value="UniProtKB-EC"/>
</dbReference>
<dbReference type="GO" id="GO:0016616">
    <property type="term" value="F:oxidoreductase activity, acting on the CH-OH group of donors, NAD or NADP as acceptor"/>
    <property type="evidence" value="ECO:0000318"/>
    <property type="project" value="GO_Central"/>
</dbReference>
<dbReference type="GO" id="GO:0009718">
    <property type="term" value="P:anthocyanin-containing compound biosynthetic process"/>
    <property type="evidence" value="ECO:0007669"/>
    <property type="project" value="UniProtKB-UniPathway"/>
</dbReference>
<dbReference type="CDD" id="cd08958">
    <property type="entry name" value="FR_SDR_e"/>
    <property type="match status" value="1"/>
</dbReference>
<dbReference type="FunFam" id="3.40.50.720:FF:000085">
    <property type="entry name" value="Dihydroflavonol reductase"/>
    <property type="match status" value="1"/>
</dbReference>
<dbReference type="Gene3D" id="3.40.50.720">
    <property type="entry name" value="NAD(P)-binding Rossmann-like Domain"/>
    <property type="match status" value="1"/>
</dbReference>
<dbReference type="InterPro" id="IPR001509">
    <property type="entry name" value="Epimerase_deHydtase"/>
</dbReference>
<dbReference type="InterPro" id="IPR036291">
    <property type="entry name" value="NAD(P)-bd_dom_sf"/>
</dbReference>
<dbReference type="InterPro" id="IPR050425">
    <property type="entry name" value="NAD(P)_dehydrat-like"/>
</dbReference>
<dbReference type="PANTHER" id="PTHR10366:SF720">
    <property type="entry name" value="DIHYDROFLAVONOL 4-REDUCTASE"/>
    <property type="match status" value="1"/>
</dbReference>
<dbReference type="PANTHER" id="PTHR10366">
    <property type="entry name" value="NAD DEPENDENT EPIMERASE/DEHYDRATASE"/>
    <property type="match status" value="1"/>
</dbReference>
<dbReference type="Pfam" id="PF01370">
    <property type="entry name" value="Epimerase"/>
    <property type="match status" value="1"/>
</dbReference>
<dbReference type="SUPFAM" id="SSF51735">
    <property type="entry name" value="NAD(P)-binding Rossmann-fold domains"/>
    <property type="match status" value="1"/>
</dbReference>
<gene>
    <name type="primary">A1</name>
</gene>
<feature type="chain" id="PRO_0000215569" description="Dihydroflavonol 4-reductase">
    <location>
        <begin position="1"/>
        <end position="357"/>
    </location>
</feature>
<feature type="binding site" evidence="1">
    <location>
        <position position="49"/>
    </location>
    <ligand>
        <name>NADP(+)</name>
        <dbReference type="ChEBI" id="CHEBI:58349"/>
    </ligand>
</feature>
<feature type="binding site" evidence="1">
    <location>
        <position position="168"/>
    </location>
    <ligand>
        <name>NADP(+)</name>
        <dbReference type="ChEBI" id="CHEBI:58349"/>
    </ligand>
</feature>
<keyword id="KW-0284">Flavonoid biosynthesis</keyword>
<keyword id="KW-0521">NADP</keyword>
<keyword id="KW-0560">Oxidoreductase</keyword>
<keyword id="KW-1185">Reference proteome</keyword>
<organism>
    <name type="scientific">Zea mays</name>
    <name type="common">Maize</name>
    <dbReference type="NCBI Taxonomy" id="4577"/>
    <lineage>
        <taxon>Eukaryota</taxon>
        <taxon>Viridiplantae</taxon>
        <taxon>Streptophyta</taxon>
        <taxon>Embryophyta</taxon>
        <taxon>Tracheophyta</taxon>
        <taxon>Spermatophyta</taxon>
        <taxon>Magnoliopsida</taxon>
        <taxon>Liliopsida</taxon>
        <taxon>Poales</taxon>
        <taxon>Poaceae</taxon>
        <taxon>PACMAD clade</taxon>
        <taxon>Panicoideae</taxon>
        <taxon>Andropogonodae</taxon>
        <taxon>Andropogoneae</taxon>
        <taxon>Tripsacinae</taxon>
        <taxon>Zea</taxon>
    </lineage>
</organism>